<organism>
    <name type="scientific">Pseudomonas putida (strain ATCC 47054 / DSM 6125 / CFBP 8728 / NCIMB 11950 / KT2440)</name>
    <dbReference type="NCBI Taxonomy" id="160488"/>
    <lineage>
        <taxon>Bacteria</taxon>
        <taxon>Pseudomonadati</taxon>
        <taxon>Pseudomonadota</taxon>
        <taxon>Gammaproteobacteria</taxon>
        <taxon>Pseudomonadales</taxon>
        <taxon>Pseudomonadaceae</taxon>
        <taxon>Pseudomonas</taxon>
    </lineage>
</organism>
<name>FOLD2_PSEPK</name>
<sequence length="284" mass="30623">MTAHLIDGKAIAASLRQQIAQRVVERRQQGLRTPGLAVILVGTDPASQVYVSHKRKDCEEVGFISQAFDLPSETTQQALTELIDRLNDDPAVDGILLQLPLPAHLDASLLLERIRPDKDVDGFHPYNIGRLAQRIPLLRPCTPKGIMTLLESTGQDLYGMNAVIVGASNIVGRPMAMELLLAGCTVTVCHRFTKDLAGHVGRADLVVVAAGKPGLVKGEWVKEGAIVIDVGINRQEDGKLVGDVVYETALPRAGWITPVPGGVGPMTRACLLENTLYAAEELHK</sequence>
<keyword id="KW-0028">Amino-acid biosynthesis</keyword>
<keyword id="KW-0368">Histidine biosynthesis</keyword>
<keyword id="KW-0378">Hydrolase</keyword>
<keyword id="KW-0486">Methionine biosynthesis</keyword>
<keyword id="KW-0511">Multifunctional enzyme</keyword>
<keyword id="KW-0521">NADP</keyword>
<keyword id="KW-0554">One-carbon metabolism</keyword>
<keyword id="KW-0560">Oxidoreductase</keyword>
<keyword id="KW-0658">Purine biosynthesis</keyword>
<keyword id="KW-1185">Reference proteome</keyword>
<reference key="1">
    <citation type="journal article" date="2002" name="Environ. Microbiol.">
        <title>Complete genome sequence and comparative analysis of the metabolically versatile Pseudomonas putida KT2440.</title>
        <authorList>
            <person name="Nelson K.E."/>
            <person name="Weinel C."/>
            <person name="Paulsen I.T."/>
            <person name="Dodson R.J."/>
            <person name="Hilbert H."/>
            <person name="Martins dos Santos V.A.P."/>
            <person name="Fouts D.E."/>
            <person name="Gill S.R."/>
            <person name="Pop M."/>
            <person name="Holmes M."/>
            <person name="Brinkac L.M."/>
            <person name="Beanan M.J."/>
            <person name="DeBoy R.T."/>
            <person name="Daugherty S.C."/>
            <person name="Kolonay J.F."/>
            <person name="Madupu R."/>
            <person name="Nelson W.C."/>
            <person name="White O."/>
            <person name="Peterson J.D."/>
            <person name="Khouri H.M."/>
            <person name="Hance I."/>
            <person name="Chris Lee P."/>
            <person name="Holtzapple E.K."/>
            <person name="Scanlan D."/>
            <person name="Tran K."/>
            <person name="Moazzez A."/>
            <person name="Utterback T.R."/>
            <person name="Rizzo M."/>
            <person name="Lee K."/>
            <person name="Kosack D."/>
            <person name="Moestl D."/>
            <person name="Wedler H."/>
            <person name="Lauber J."/>
            <person name="Stjepandic D."/>
            <person name="Hoheisel J."/>
            <person name="Straetz M."/>
            <person name="Heim S."/>
            <person name="Kiewitz C."/>
            <person name="Eisen J.A."/>
            <person name="Timmis K.N."/>
            <person name="Duesterhoeft A."/>
            <person name="Tuemmler B."/>
            <person name="Fraser C.M."/>
        </authorList>
    </citation>
    <scope>NUCLEOTIDE SEQUENCE [LARGE SCALE GENOMIC DNA]</scope>
    <source>
        <strain>ATCC 47054 / DSM 6125 / CFBP 8728 / NCIMB 11950 / KT2440</strain>
    </source>
</reference>
<gene>
    <name evidence="1" type="primary">folD2</name>
    <name type="synonym">folD-2</name>
    <name type="ordered locus">PP_2265</name>
</gene>
<protein>
    <recommendedName>
        <fullName evidence="1">Bifunctional protein FolD 2</fullName>
    </recommendedName>
    <domain>
        <recommendedName>
            <fullName evidence="1">Methylenetetrahydrofolate dehydrogenase</fullName>
            <ecNumber evidence="1">1.5.1.5</ecNumber>
        </recommendedName>
    </domain>
    <domain>
        <recommendedName>
            <fullName evidence="1">Methenyltetrahydrofolate cyclohydrolase</fullName>
            <ecNumber evidence="1">3.5.4.9</ecNumber>
        </recommendedName>
    </domain>
</protein>
<dbReference type="EC" id="1.5.1.5" evidence="1"/>
<dbReference type="EC" id="3.5.4.9" evidence="1"/>
<dbReference type="EMBL" id="AE015451">
    <property type="protein sequence ID" value="AAN67878.1"/>
    <property type="molecule type" value="Genomic_DNA"/>
</dbReference>
<dbReference type="RefSeq" id="NP_744414.1">
    <property type="nucleotide sequence ID" value="NC_002947.4"/>
</dbReference>
<dbReference type="SMR" id="Q88KM5"/>
<dbReference type="STRING" id="160488.PP_2265"/>
<dbReference type="PaxDb" id="160488-PP_2265"/>
<dbReference type="KEGG" id="ppu:PP_2265"/>
<dbReference type="PATRIC" id="fig|160488.4.peg.2392"/>
<dbReference type="eggNOG" id="COG0190">
    <property type="taxonomic scope" value="Bacteria"/>
</dbReference>
<dbReference type="HOGENOM" id="CLU_034045_2_1_6"/>
<dbReference type="OrthoDB" id="9803580at2"/>
<dbReference type="PhylomeDB" id="Q88KM5"/>
<dbReference type="BioCyc" id="PPUT160488:G1G01-2412-MONOMER"/>
<dbReference type="UniPathway" id="UPA00193"/>
<dbReference type="Proteomes" id="UP000000556">
    <property type="component" value="Chromosome"/>
</dbReference>
<dbReference type="GO" id="GO:0005829">
    <property type="term" value="C:cytosol"/>
    <property type="evidence" value="ECO:0007669"/>
    <property type="project" value="TreeGrafter"/>
</dbReference>
<dbReference type="GO" id="GO:0004477">
    <property type="term" value="F:methenyltetrahydrofolate cyclohydrolase activity"/>
    <property type="evidence" value="ECO:0007669"/>
    <property type="project" value="UniProtKB-UniRule"/>
</dbReference>
<dbReference type="GO" id="GO:0004488">
    <property type="term" value="F:methylenetetrahydrofolate dehydrogenase (NADP+) activity"/>
    <property type="evidence" value="ECO:0007669"/>
    <property type="project" value="UniProtKB-UniRule"/>
</dbReference>
<dbReference type="GO" id="GO:0000105">
    <property type="term" value="P:L-histidine biosynthetic process"/>
    <property type="evidence" value="ECO:0007669"/>
    <property type="project" value="UniProtKB-KW"/>
</dbReference>
<dbReference type="GO" id="GO:0009086">
    <property type="term" value="P:methionine biosynthetic process"/>
    <property type="evidence" value="ECO:0007669"/>
    <property type="project" value="UniProtKB-KW"/>
</dbReference>
<dbReference type="GO" id="GO:0006164">
    <property type="term" value="P:purine nucleotide biosynthetic process"/>
    <property type="evidence" value="ECO:0007669"/>
    <property type="project" value="UniProtKB-KW"/>
</dbReference>
<dbReference type="GO" id="GO:0035999">
    <property type="term" value="P:tetrahydrofolate interconversion"/>
    <property type="evidence" value="ECO:0007669"/>
    <property type="project" value="UniProtKB-UniRule"/>
</dbReference>
<dbReference type="CDD" id="cd01080">
    <property type="entry name" value="NAD_bind_m-THF_DH_Cyclohyd"/>
    <property type="match status" value="1"/>
</dbReference>
<dbReference type="FunFam" id="3.40.50.10860:FF:000001">
    <property type="entry name" value="Bifunctional protein FolD"/>
    <property type="match status" value="1"/>
</dbReference>
<dbReference type="FunFam" id="3.40.50.720:FF:000006">
    <property type="entry name" value="Bifunctional protein FolD"/>
    <property type="match status" value="1"/>
</dbReference>
<dbReference type="Gene3D" id="3.40.50.10860">
    <property type="entry name" value="Leucine Dehydrogenase, chain A, domain 1"/>
    <property type="match status" value="1"/>
</dbReference>
<dbReference type="Gene3D" id="3.40.50.720">
    <property type="entry name" value="NAD(P)-binding Rossmann-like Domain"/>
    <property type="match status" value="1"/>
</dbReference>
<dbReference type="HAMAP" id="MF_01576">
    <property type="entry name" value="THF_DHG_CYH"/>
    <property type="match status" value="1"/>
</dbReference>
<dbReference type="InterPro" id="IPR046346">
    <property type="entry name" value="Aminoacid_DH-like_N_sf"/>
</dbReference>
<dbReference type="InterPro" id="IPR036291">
    <property type="entry name" value="NAD(P)-bd_dom_sf"/>
</dbReference>
<dbReference type="InterPro" id="IPR000672">
    <property type="entry name" value="THF_DH/CycHdrlase"/>
</dbReference>
<dbReference type="InterPro" id="IPR020630">
    <property type="entry name" value="THF_DH/CycHdrlase_cat_dom"/>
</dbReference>
<dbReference type="InterPro" id="IPR020631">
    <property type="entry name" value="THF_DH/CycHdrlase_NAD-bd_dom"/>
</dbReference>
<dbReference type="NCBIfam" id="NF008058">
    <property type="entry name" value="PRK10792.1"/>
    <property type="match status" value="1"/>
</dbReference>
<dbReference type="NCBIfam" id="NF010783">
    <property type="entry name" value="PRK14186.1"/>
    <property type="match status" value="1"/>
</dbReference>
<dbReference type="PANTHER" id="PTHR48099:SF5">
    <property type="entry name" value="C-1-TETRAHYDROFOLATE SYNTHASE, CYTOPLASMIC"/>
    <property type="match status" value="1"/>
</dbReference>
<dbReference type="PANTHER" id="PTHR48099">
    <property type="entry name" value="C-1-TETRAHYDROFOLATE SYNTHASE, CYTOPLASMIC-RELATED"/>
    <property type="match status" value="1"/>
</dbReference>
<dbReference type="Pfam" id="PF00763">
    <property type="entry name" value="THF_DHG_CYH"/>
    <property type="match status" value="1"/>
</dbReference>
<dbReference type="Pfam" id="PF02882">
    <property type="entry name" value="THF_DHG_CYH_C"/>
    <property type="match status" value="1"/>
</dbReference>
<dbReference type="PRINTS" id="PR00085">
    <property type="entry name" value="THFDHDRGNASE"/>
</dbReference>
<dbReference type="SUPFAM" id="SSF53223">
    <property type="entry name" value="Aminoacid dehydrogenase-like, N-terminal domain"/>
    <property type="match status" value="1"/>
</dbReference>
<dbReference type="SUPFAM" id="SSF51735">
    <property type="entry name" value="NAD(P)-binding Rossmann-fold domains"/>
    <property type="match status" value="1"/>
</dbReference>
<proteinExistence type="inferred from homology"/>
<feature type="chain" id="PRO_0000268447" description="Bifunctional protein FolD 2">
    <location>
        <begin position="1"/>
        <end position="284"/>
    </location>
</feature>
<feature type="binding site" evidence="1">
    <location>
        <begin position="166"/>
        <end position="168"/>
    </location>
    <ligand>
        <name>NADP(+)</name>
        <dbReference type="ChEBI" id="CHEBI:58349"/>
    </ligand>
</feature>
<feature type="binding site" evidence="1">
    <location>
        <position position="232"/>
    </location>
    <ligand>
        <name>NADP(+)</name>
        <dbReference type="ChEBI" id="CHEBI:58349"/>
    </ligand>
</feature>
<accession>Q88KM5</accession>
<comment type="function">
    <text evidence="1">Catalyzes the oxidation of 5,10-methylenetetrahydrofolate to 5,10-methenyltetrahydrofolate and then the hydrolysis of 5,10-methenyltetrahydrofolate to 10-formyltetrahydrofolate.</text>
</comment>
<comment type="catalytic activity">
    <reaction evidence="1">
        <text>(6R)-5,10-methylene-5,6,7,8-tetrahydrofolate + NADP(+) = (6R)-5,10-methenyltetrahydrofolate + NADPH</text>
        <dbReference type="Rhea" id="RHEA:22812"/>
        <dbReference type="ChEBI" id="CHEBI:15636"/>
        <dbReference type="ChEBI" id="CHEBI:57455"/>
        <dbReference type="ChEBI" id="CHEBI:57783"/>
        <dbReference type="ChEBI" id="CHEBI:58349"/>
        <dbReference type="EC" id="1.5.1.5"/>
    </reaction>
</comment>
<comment type="catalytic activity">
    <reaction evidence="1">
        <text>(6R)-5,10-methenyltetrahydrofolate + H2O = (6R)-10-formyltetrahydrofolate + H(+)</text>
        <dbReference type="Rhea" id="RHEA:23700"/>
        <dbReference type="ChEBI" id="CHEBI:15377"/>
        <dbReference type="ChEBI" id="CHEBI:15378"/>
        <dbReference type="ChEBI" id="CHEBI:57455"/>
        <dbReference type="ChEBI" id="CHEBI:195366"/>
        <dbReference type="EC" id="3.5.4.9"/>
    </reaction>
</comment>
<comment type="pathway">
    <text evidence="1">One-carbon metabolism; tetrahydrofolate interconversion.</text>
</comment>
<comment type="subunit">
    <text evidence="1">Homodimer.</text>
</comment>
<comment type="similarity">
    <text evidence="1">Belongs to the tetrahydrofolate dehydrogenase/cyclohydrolase family.</text>
</comment>
<evidence type="ECO:0000255" key="1">
    <source>
        <dbReference type="HAMAP-Rule" id="MF_01576"/>
    </source>
</evidence>